<keyword id="KW-1015">Disulfide bond</keyword>
<keyword id="KW-0872">Ion channel impairing toxin</keyword>
<keyword id="KW-0960">Knottin</keyword>
<keyword id="KW-0964">Secreted</keyword>
<keyword id="KW-0732">Signal</keyword>
<keyword id="KW-0800">Toxin</keyword>
<protein>
    <recommendedName>
        <fullName>Conotoxin Vc6.11</fullName>
    </recommendedName>
</protein>
<organism>
    <name type="scientific">Conus victoriae</name>
    <name type="common">Queen Victoria cone</name>
    <dbReference type="NCBI Taxonomy" id="319920"/>
    <lineage>
        <taxon>Eukaryota</taxon>
        <taxon>Metazoa</taxon>
        <taxon>Spiralia</taxon>
        <taxon>Lophotrochozoa</taxon>
        <taxon>Mollusca</taxon>
        <taxon>Gastropoda</taxon>
        <taxon>Caenogastropoda</taxon>
        <taxon>Neogastropoda</taxon>
        <taxon>Conoidea</taxon>
        <taxon>Conidae</taxon>
        <taxon>Conus</taxon>
        <taxon>Cylinder</taxon>
    </lineage>
</organism>
<evidence type="ECO:0000250" key="1"/>
<evidence type="ECO:0000255" key="2"/>
<evidence type="ECO:0000269" key="3">
    <source>
    </source>
</evidence>
<evidence type="ECO:0000305" key="4"/>
<feature type="signal peptide" evidence="2">
    <location>
        <begin position="1"/>
        <end position="19"/>
    </location>
</feature>
<feature type="propeptide" id="PRO_0000425171" evidence="1">
    <location>
        <begin position="20"/>
        <end position="41"/>
    </location>
</feature>
<feature type="peptide" id="PRO_0000425172" description="Conotoxin Vc6.11">
    <location>
        <begin position="43"/>
        <end position="74"/>
    </location>
</feature>
<feature type="disulfide bond" evidence="1">
    <location>
        <begin position="55"/>
        <end position="66"/>
    </location>
</feature>
<feature type="disulfide bond" evidence="1">
    <location>
        <begin position="61"/>
        <end position="71"/>
    </location>
</feature>
<proteinExistence type="evidence at transcript level"/>
<sequence length="74" mass="8579">MEKLTILLLVAAVLMSTQALIQEQRQKAKINLFSKRKPSAERWWGENDRRVFGSCTADEECCFNNCVQAYCFFV</sequence>
<accession>G1AS77</accession>
<dbReference type="EMBL" id="JF433904">
    <property type="protein sequence ID" value="AEA35360.1"/>
    <property type="molecule type" value="mRNA"/>
</dbReference>
<dbReference type="ConoServer" id="4272">
    <property type="toxin name" value="Vc6.11 precursor"/>
</dbReference>
<dbReference type="GO" id="GO:0005576">
    <property type="term" value="C:extracellular region"/>
    <property type="evidence" value="ECO:0007669"/>
    <property type="project" value="UniProtKB-SubCell"/>
</dbReference>
<dbReference type="GO" id="GO:0008200">
    <property type="term" value="F:ion channel inhibitor activity"/>
    <property type="evidence" value="ECO:0007669"/>
    <property type="project" value="InterPro"/>
</dbReference>
<dbReference type="GO" id="GO:0090729">
    <property type="term" value="F:toxin activity"/>
    <property type="evidence" value="ECO:0007669"/>
    <property type="project" value="UniProtKB-KW"/>
</dbReference>
<dbReference type="InterPro" id="IPR004214">
    <property type="entry name" value="Conotoxin"/>
</dbReference>
<dbReference type="Pfam" id="PF02950">
    <property type="entry name" value="Conotoxin"/>
    <property type="match status" value="1"/>
</dbReference>
<name>O26B_CONVC</name>
<comment type="function">
    <text evidence="1">Inhibits voltage-gated ion channels.</text>
</comment>
<comment type="subcellular location">
    <subcellularLocation>
        <location evidence="1">Secreted</location>
    </subcellularLocation>
</comment>
<comment type="tissue specificity">
    <text>Expressed by the venom duct.</text>
</comment>
<comment type="developmental stage">
    <text evidence="3">Only expressed in adults.</text>
</comment>
<comment type="domain">
    <text evidence="1">The presence of a 'disulfide through disulfide knot' structurally defines this protein as a knottin.</text>
</comment>
<comment type="domain">
    <text>The cysteine framework is VI/VII (C-C-CC-C-C).</text>
</comment>
<comment type="similarity">
    <text evidence="4">Belongs to the conotoxin O2 superfamily.</text>
</comment>
<comment type="caution">
    <text evidence="4">Contains only 5 Cys residues instead of the 6 residues that are usually found in the O2 superfamily.</text>
</comment>
<reference key="1">
    <citation type="journal article" date="2011" name="J. Biol. Chem.">
        <title>Embryonic toxin expression in the cone snail Conus victoriae: primed to kill or divergent function?</title>
        <authorList>
            <person name="Safavi-Hemami H."/>
            <person name="Siero W.A."/>
            <person name="Kuang Z."/>
            <person name="Williamson N.A."/>
            <person name="Karas J.A."/>
            <person name="Page L.R."/>
            <person name="Macmillan D."/>
            <person name="Callaghan B."/>
            <person name="Kompella S.N."/>
            <person name="Adams D.J."/>
            <person name="Norton R.S."/>
            <person name="Purcell A.W."/>
        </authorList>
    </citation>
    <scope>NUCLEOTIDE SEQUENCE [MRNA]</scope>
    <scope>DEVELOPMENTAL STAGE</scope>
    <source>
        <tissue>Embryo</tissue>
        <tissue>Venom duct</tissue>
    </source>
</reference>